<proteinExistence type="inferred from homology"/>
<gene>
    <name evidence="1" type="primary">kdsA</name>
    <name type="ordered locus">CJE0433</name>
</gene>
<organism>
    <name type="scientific">Campylobacter jejuni (strain RM1221)</name>
    <dbReference type="NCBI Taxonomy" id="195099"/>
    <lineage>
        <taxon>Bacteria</taxon>
        <taxon>Pseudomonadati</taxon>
        <taxon>Campylobacterota</taxon>
        <taxon>Epsilonproteobacteria</taxon>
        <taxon>Campylobacterales</taxon>
        <taxon>Campylobacteraceae</taxon>
        <taxon>Campylobacter</taxon>
    </lineage>
</organism>
<protein>
    <recommendedName>
        <fullName evidence="1">2-dehydro-3-deoxyphosphooctonate aldolase</fullName>
        <ecNumber evidence="1">2.5.1.55</ecNumber>
    </recommendedName>
    <alternativeName>
        <fullName evidence="1">3-deoxy-D-manno-octulosonic acid 8-phosphate synthase</fullName>
    </alternativeName>
    <alternativeName>
        <fullName evidence="1">KDO-8-phosphate synthase</fullName>
        <shortName evidence="1">KDO 8-P synthase</shortName>
        <shortName evidence="1">KDOPS</shortName>
    </alternativeName>
    <alternativeName>
        <fullName evidence="1">Phospho-2-dehydro-3-deoxyoctonate aldolase</fullName>
    </alternativeName>
</protein>
<keyword id="KW-0963">Cytoplasm</keyword>
<keyword id="KW-0448">Lipopolysaccharide biosynthesis</keyword>
<keyword id="KW-0808">Transferase</keyword>
<feature type="chain" id="PRO_0000187113" description="2-dehydro-3-deoxyphosphooctonate aldolase">
    <location>
        <begin position="1"/>
        <end position="271"/>
    </location>
</feature>
<reference key="1">
    <citation type="journal article" date="2005" name="PLoS Biol.">
        <title>Major structural differences and novel potential virulence mechanisms from the genomes of multiple Campylobacter species.</title>
        <authorList>
            <person name="Fouts D.E."/>
            <person name="Mongodin E.F."/>
            <person name="Mandrell R.E."/>
            <person name="Miller W.G."/>
            <person name="Rasko D.A."/>
            <person name="Ravel J."/>
            <person name="Brinkac L.M."/>
            <person name="DeBoy R.T."/>
            <person name="Parker C.T."/>
            <person name="Daugherty S.C."/>
            <person name="Dodson R.J."/>
            <person name="Durkin A.S."/>
            <person name="Madupu R."/>
            <person name="Sullivan S.A."/>
            <person name="Shetty J.U."/>
            <person name="Ayodeji M.A."/>
            <person name="Shvartsbeyn A."/>
            <person name="Schatz M.C."/>
            <person name="Badger J.H."/>
            <person name="Fraser C.M."/>
            <person name="Nelson K.E."/>
        </authorList>
    </citation>
    <scope>NUCLEOTIDE SEQUENCE [LARGE SCALE GENOMIC DNA]</scope>
    <source>
        <strain>RM1221</strain>
    </source>
</reference>
<name>KDSA_CAMJR</name>
<sequence length="271" mass="29780">MKKMILIAGPCVIESKDLIFKVAEQLKNFNENPNIEFYFKSSFDKANRTSINSFRGPGLEEGLKILQSVKDEFGMKILTDIHESNQANPVSEVADVLQIPAFLCRQTDLLVAAAKTKAKINIKKGQFLNPSDIKYSVKKVLQTRGIEDEGYEAAQRNGVFVAERGASFGYGNLVVDMRSLVIMREFAPVIFDATHSVQMPGAAGGSSGGKSEFVEPLARAAAAVGIDGFFFETHINPCEALCDGPNMLNLTRLKNCVNTLLEIQNIIKENK</sequence>
<accession>Q5HW83</accession>
<comment type="catalytic activity">
    <reaction evidence="1">
        <text>D-arabinose 5-phosphate + phosphoenolpyruvate + H2O = 3-deoxy-alpha-D-manno-2-octulosonate-8-phosphate + phosphate</text>
        <dbReference type="Rhea" id="RHEA:14053"/>
        <dbReference type="ChEBI" id="CHEBI:15377"/>
        <dbReference type="ChEBI" id="CHEBI:43474"/>
        <dbReference type="ChEBI" id="CHEBI:57693"/>
        <dbReference type="ChEBI" id="CHEBI:58702"/>
        <dbReference type="ChEBI" id="CHEBI:85985"/>
        <dbReference type="EC" id="2.5.1.55"/>
    </reaction>
</comment>
<comment type="pathway">
    <text evidence="1">Carbohydrate biosynthesis; 3-deoxy-D-manno-octulosonate biosynthesis; 3-deoxy-D-manno-octulosonate from D-ribulose 5-phosphate: step 2/3.</text>
</comment>
<comment type="pathway">
    <text evidence="1">Bacterial outer membrane biogenesis; lipopolysaccharide biosynthesis.</text>
</comment>
<comment type="subcellular location">
    <subcellularLocation>
        <location evidence="1">Cytoplasm</location>
    </subcellularLocation>
</comment>
<comment type="similarity">
    <text evidence="1">Belongs to the KdsA family.</text>
</comment>
<evidence type="ECO:0000255" key="1">
    <source>
        <dbReference type="HAMAP-Rule" id="MF_00056"/>
    </source>
</evidence>
<dbReference type="EC" id="2.5.1.55" evidence="1"/>
<dbReference type="EMBL" id="CP000025">
    <property type="protein sequence ID" value="AAW35022.1"/>
    <property type="molecule type" value="Genomic_DNA"/>
</dbReference>
<dbReference type="RefSeq" id="WP_002858652.1">
    <property type="nucleotide sequence ID" value="NC_003912.7"/>
</dbReference>
<dbReference type="SMR" id="Q5HW83"/>
<dbReference type="KEGG" id="cjr:CJE0433"/>
<dbReference type="HOGENOM" id="CLU_036666_0_0_7"/>
<dbReference type="UniPathway" id="UPA00030"/>
<dbReference type="UniPathway" id="UPA00357">
    <property type="reaction ID" value="UER00474"/>
</dbReference>
<dbReference type="GO" id="GO:0005737">
    <property type="term" value="C:cytoplasm"/>
    <property type="evidence" value="ECO:0007669"/>
    <property type="project" value="UniProtKB-SubCell"/>
</dbReference>
<dbReference type="GO" id="GO:0008676">
    <property type="term" value="F:3-deoxy-8-phosphooctulonate synthase activity"/>
    <property type="evidence" value="ECO:0007669"/>
    <property type="project" value="UniProtKB-UniRule"/>
</dbReference>
<dbReference type="GO" id="GO:0019294">
    <property type="term" value="P:keto-3-deoxy-D-manno-octulosonic acid biosynthetic process"/>
    <property type="evidence" value="ECO:0007669"/>
    <property type="project" value="UniProtKB-UniRule"/>
</dbReference>
<dbReference type="Gene3D" id="3.20.20.70">
    <property type="entry name" value="Aldolase class I"/>
    <property type="match status" value="1"/>
</dbReference>
<dbReference type="HAMAP" id="MF_00056">
    <property type="entry name" value="KDO8P_synth"/>
    <property type="match status" value="1"/>
</dbReference>
<dbReference type="InterPro" id="IPR013785">
    <property type="entry name" value="Aldolase_TIM"/>
</dbReference>
<dbReference type="InterPro" id="IPR006218">
    <property type="entry name" value="DAHP1/KDSA"/>
</dbReference>
<dbReference type="InterPro" id="IPR006269">
    <property type="entry name" value="KDO8P_synthase"/>
</dbReference>
<dbReference type="NCBIfam" id="TIGR01362">
    <property type="entry name" value="KDO8P_synth"/>
    <property type="match status" value="1"/>
</dbReference>
<dbReference type="NCBIfam" id="NF003543">
    <property type="entry name" value="PRK05198.1"/>
    <property type="match status" value="1"/>
</dbReference>
<dbReference type="PANTHER" id="PTHR21057">
    <property type="entry name" value="PHOSPHO-2-DEHYDRO-3-DEOXYHEPTONATE ALDOLASE"/>
    <property type="match status" value="1"/>
</dbReference>
<dbReference type="Pfam" id="PF00793">
    <property type="entry name" value="DAHP_synth_1"/>
    <property type="match status" value="1"/>
</dbReference>
<dbReference type="SUPFAM" id="SSF51569">
    <property type="entry name" value="Aldolase"/>
    <property type="match status" value="1"/>
</dbReference>